<keyword id="KW-0324">Glycolysis</keyword>
<keyword id="KW-0413">Isomerase</keyword>
<keyword id="KW-0464">Manganese</keyword>
<keyword id="KW-0479">Metal-binding</keyword>
<organism>
    <name type="scientific">Microcystis aeruginosa (strain NIES-843 / IAM M-2473)</name>
    <dbReference type="NCBI Taxonomy" id="449447"/>
    <lineage>
        <taxon>Bacteria</taxon>
        <taxon>Bacillati</taxon>
        <taxon>Cyanobacteriota</taxon>
        <taxon>Cyanophyceae</taxon>
        <taxon>Oscillatoriophycideae</taxon>
        <taxon>Chroococcales</taxon>
        <taxon>Microcystaceae</taxon>
        <taxon>Microcystis</taxon>
    </lineage>
</organism>
<feature type="chain" id="PRO_1000084308" description="2,3-bisphosphoglycerate-independent phosphoglycerate mutase">
    <location>
        <begin position="1"/>
        <end position="532"/>
    </location>
</feature>
<feature type="active site" description="Phosphoserine intermediate" evidence="1">
    <location>
        <position position="65"/>
    </location>
</feature>
<feature type="binding site" evidence="1">
    <location>
        <position position="15"/>
    </location>
    <ligand>
        <name>Mn(2+)</name>
        <dbReference type="ChEBI" id="CHEBI:29035"/>
        <label>2</label>
    </ligand>
</feature>
<feature type="binding site" evidence="1">
    <location>
        <position position="65"/>
    </location>
    <ligand>
        <name>Mn(2+)</name>
        <dbReference type="ChEBI" id="CHEBI:29035"/>
        <label>2</label>
    </ligand>
</feature>
<feature type="binding site" evidence="1">
    <location>
        <position position="126"/>
    </location>
    <ligand>
        <name>substrate</name>
    </ligand>
</feature>
<feature type="binding site" evidence="1">
    <location>
        <begin position="156"/>
        <end position="157"/>
    </location>
    <ligand>
        <name>substrate</name>
    </ligand>
</feature>
<feature type="binding site" evidence="1">
    <location>
        <position position="188"/>
    </location>
    <ligand>
        <name>substrate</name>
    </ligand>
</feature>
<feature type="binding site" evidence="1">
    <location>
        <position position="194"/>
    </location>
    <ligand>
        <name>substrate</name>
    </ligand>
</feature>
<feature type="binding site" evidence="1">
    <location>
        <begin position="258"/>
        <end position="261"/>
    </location>
    <ligand>
        <name>substrate</name>
    </ligand>
</feature>
<feature type="binding site" evidence="1">
    <location>
        <position position="331"/>
    </location>
    <ligand>
        <name>substrate</name>
    </ligand>
</feature>
<feature type="binding site" evidence="1">
    <location>
        <position position="398"/>
    </location>
    <ligand>
        <name>Mn(2+)</name>
        <dbReference type="ChEBI" id="CHEBI:29035"/>
        <label>1</label>
    </ligand>
</feature>
<feature type="binding site" evidence="1">
    <location>
        <position position="402"/>
    </location>
    <ligand>
        <name>Mn(2+)</name>
        <dbReference type="ChEBI" id="CHEBI:29035"/>
        <label>1</label>
    </ligand>
</feature>
<feature type="binding site" evidence="1">
    <location>
        <position position="439"/>
    </location>
    <ligand>
        <name>Mn(2+)</name>
        <dbReference type="ChEBI" id="CHEBI:29035"/>
        <label>2</label>
    </ligand>
</feature>
<feature type="binding site" evidence="1">
    <location>
        <position position="440"/>
    </location>
    <ligand>
        <name>Mn(2+)</name>
        <dbReference type="ChEBI" id="CHEBI:29035"/>
        <label>2</label>
    </ligand>
</feature>
<feature type="binding site" evidence="1">
    <location>
        <position position="457"/>
    </location>
    <ligand>
        <name>Mn(2+)</name>
        <dbReference type="ChEBI" id="CHEBI:29035"/>
        <label>1</label>
    </ligand>
</feature>
<sequence>MTHAPISPVVLVILDGWGYRPQRSDNAIAMAKTPIMDSLWEVYPHTLIRTSAKDVGLPEGQMGNSEVGHLNIGAGRVVPQELVRISDAIEDGSIQQNQALLKLCAEIRPKKSKLHLIGLCSEGGVHSHLDHLLGLLDLAKVQGISDVCIHVITDGRDTNVTDGMPAIKRIQEHINKIKLGRMVTLSGRYYAMDRDRRWDRVEKAYNVMTSDQGIDGRSITEVLQAFYDQNITDEFIPPTRIAPGAIEAGDGVIFYNFRPDRARQLCYALTMPDFEDFDRDLISPLSFVTFTQYDPKLPVDVAFAPQNLNNILGQVIAQQGLKQFRCAETEKYPHVTYFFNGGLEKPFEGEVRELIPSPKVATYDQAPAMSAAAVTTSVCGAIEQGIYSLVVVNYANPDMVGHTGILDAAMKAVETVDLCLAKLLSSVNKLGGTVLITADHGNAETMVDESGNPWTAHTTNPVPLILIEGEGRKIPGHGGDVQLRDDGRLADIAPTILEILSIPVPVEMTGRSLIKPAEVEIKASRTPVRISL</sequence>
<name>GPMI_MICAN</name>
<proteinExistence type="inferred from homology"/>
<protein>
    <recommendedName>
        <fullName evidence="1">2,3-bisphosphoglycerate-independent phosphoglycerate mutase</fullName>
        <shortName evidence="1">BPG-independent PGAM</shortName>
        <shortName evidence="1">Phosphoglyceromutase</shortName>
        <shortName evidence="1">iPGM</shortName>
        <ecNumber evidence="1">5.4.2.12</ecNumber>
    </recommendedName>
</protein>
<dbReference type="EC" id="5.4.2.12" evidence="1"/>
<dbReference type="EMBL" id="AP009552">
    <property type="protein sequence ID" value="BAG03059.1"/>
    <property type="molecule type" value="Genomic_DNA"/>
</dbReference>
<dbReference type="RefSeq" id="WP_012266173.1">
    <property type="nucleotide sequence ID" value="NC_010296.1"/>
</dbReference>
<dbReference type="SMR" id="B0JLN5"/>
<dbReference type="STRING" id="449447.MAE_32370"/>
<dbReference type="PaxDb" id="449447-MAE_32370"/>
<dbReference type="EnsemblBacteria" id="BAG03059">
    <property type="protein sequence ID" value="BAG03059"/>
    <property type="gene ID" value="MAE_32370"/>
</dbReference>
<dbReference type="KEGG" id="mar:MAE_32370"/>
<dbReference type="PATRIC" id="fig|449447.4.peg.2935"/>
<dbReference type="eggNOG" id="COG0696">
    <property type="taxonomic scope" value="Bacteria"/>
</dbReference>
<dbReference type="HOGENOM" id="CLU_026099_2_0_3"/>
<dbReference type="BioCyc" id="MAER449447:MAE_RS14015-MONOMER"/>
<dbReference type="UniPathway" id="UPA00109">
    <property type="reaction ID" value="UER00186"/>
</dbReference>
<dbReference type="Proteomes" id="UP000001510">
    <property type="component" value="Chromosome"/>
</dbReference>
<dbReference type="GO" id="GO:0005829">
    <property type="term" value="C:cytosol"/>
    <property type="evidence" value="ECO:0007669"/>
    <property type="project" value="TreeGrafter"/>
</dbReference>
<dbReference type="GO" id="GO:0030145">
    <property type="term" value="F:manganese ion binding"/>
    <property type="evidence" value="ECO:0007669"/>
    <property type="project" value="UniProtKB-UniRule"/>
</dbReference>
<dbReference type="GO" id="GO:0004619">
    <property type="term" value="F:phosphoglycerate mutase activity"/>
    <property type="evidence" value="ECO:0007669"/>
    <property type="project" value="UniProtKB-EC"/>
</dbReference>
<dbReference type="GO" id="GO:0006007">
    <property type="term" value="P:glucose catabolic process"/>
    <property type="evidence" value="ECO:0007669"/>
    <property type="project" value="InterPro"/>
</dbReference>
<dbReference type="GO" id="GO:0006096">
    <property type="term" value="P:glycolytic process"/>
    <property type="evidence" value="ECO:0007669"/>
    <property type="project" value="UniProtKB-UniRule"/>
</dbReference>
<dbReference type="CDD" id="cd16010">
    <property type="entry name" value="iPGM"/>
    <property type="match status" value="1"/>
</dbReference>
<dbReference type="FunFam" id="3.40.1450.10:FF:000002">
    <property type="entry name" value="2,3-bisphosphoglycerate-independent phosphoglycerate mutase"/>
    <property type="match status" value="1"/>
</dbReference>
<dbReference type="Gene3D" id="3.40.720.10">
    <property type="entry name" value="Alkaline Phosphatase, subunit A"/>
    <property type="match status" value="1"/>
</dbReference>
<dbReference type="Gene3D" id="3.40.1450.10">
    <property type="entry name" value="BPG-independent phosphoglycerate mutase, domain B"/>
    <property type="match status" value="1"/>
</dbReference>
<dbReference type="HAMAP" id="MF_01038">
    <property type="entry name" value="GpmI"/>
    <property type="match status" value="1"/>
</dbReference>
<dbReference type="InterPro" id="IPR017850">
    <property type="entry name" value="Alkaline_phosphatase_core_sf"/>
</dbReference>
<dbReference type="InterPro" id="IPR011258">
    <property type="entry name" value="BPG-indep_PGM_N"/>
</dbReference>
<dbReference type="InterPro" id="IPR006124">
    <property type="entry name" value="Metalloenzyme"/>
</dbReference>
<dbReference type="InterPro" id="IPR036646">
    <property type="entry name" value="PGAM_B_sf"/>
</dbReference>
<dbReference type="InterPro" id="IPR005995">
    <property type="entry name" value="Pgm_bpd_ind"/>
</dbReference>
<dbReference type="NCBIfam" id="TIGR01307">
    <property type="entry name" value="pgm_bpd_ind"/>
    <property type="match status" value="1"/>
</dbReference>
<dbReference type="PANTHER" id="PTHR31637">
    <property type="entry name" value="2,3-BISPHOSPHOGLYCERATE-INDEPENDENT PHOSPHOGLYCERATE MUTASE"/>
    <property type="match status" value="1"/>
</dbReference>
<dbReference type="PANTHER" id="PTHR31637:SF0">
    <property type="entry name" value="2,3-BISPHOSPHOGLYCERATE-INDEPENDENT PHOSPHOGLYCERATE MUTASE"/>
    <property type="match status" value="1"/>
</dbReference>
<dbReference type="Pfam" id="PF06415">
    <property type="entry name" value="iPGM_N"/>
    <property type="match status" value="1"/>
</dbReference>
<dbReference type="Pfam" id="PF01676">
    <property type="entry name" value="Metalloenzyme"/>
    <property type="match status" value="1"/>
</dbReference>
<dbReference type="PIRSF" id="PIRSF001492">
    <property type="entry name" value="IPGAM"/>
    <property type="match status" value="1"/>
</dbReference>
<dbReference type="SUPFAM" id="SSF64158">
    <property type="entry name" value="2,3-Bisphosphoglycerate-independent phosphoglycerate mutase, substrate-binding domain"/>
    <property type="match status" value="1"/>
</dbReference>
<dbReference type="SUPFAM" id="SSF53649">
    <property type="entry name" value="Alkaline phosphatase-like"/>
    <property type="match status" value="1"/>
</dbReference>
<reference key="1">
    <citation type="journal article" date="2007" name="DNA Res.">
        <title>Complete genomic structure of the bloom-forming toxic cyanobacterium Microcystis aeruginosa NIES-843.</title>
        <authorList>
            <person name="Kaneko T."/>
            <person name="Nakajima N."/>
            <person name="Okamoto S."/>
            <person name="Suzuki I."/>
            <person name="Tanabe Y."/>
            <person name="Tamaoki M."/>
            <person name="Nakamura Y."/>
            <person name="Kasai F."/>
            <person name="Watanabe A."/>
            <person name="Kawashima K."/>
            <person name="Kishida Y."/>
            <person name="Ono A."/>
            <person name="Shimizu Y."/>
            <person name="Takahashi C."/>
            <person name="Minami C."/>
            <person name="Fujishiro T."/>
            <person name="Kohara M."/>
            <person name="Katoh M."/>
            <person name="Nakazaki N."/>
            <person name="Nakayama S."/>
            <person name="Yamada M."/>
            <person name="Tabata S."/>
            <person name="Watanabe M.M."/>
        </authorList>
    </citation>
    <scope>NUCLEOTIDE SEQUENCE [LARGE SCALE GENOMIC DNA]</scope>
    <source>
        <strain>NIES-843 / IAM M-247</strain>
    </source>
</reference>
<accession>B0JLN5</accession>
<evidence type="ECO:0000255" key="1">
    <source>
        <dbReference type="HAMAP-Rule" id="MF_01038"/>
    </source>
</evidence>
<comment type="function">
    <text evidence="1">Catalyzes the interconversion of 2-phosphoglycerate and 3-phosphoglycerate.</text>
</comment>
<comment type="catalytic activity">
    <reaction evidence="1">
        <text>(2R)-2-phosphoglycerate = (2R)-3-phosphoglycerate</text>
        <dbReference type="Rhea" id="RHEA:15901"/>
        <dbReference type="ChEBI" id="CHEBI:58272"/>
        <dbReference type="ChEBI" id="CHEBI:58289"/>
        <dbReference type="EC" id="5.4.2.12"/>
    </reaction>
</comment>
<comment type="cofactor">
    <cofactor evidence="1">
        <name>Mn(2+)</name>
        <dbReference type="ChEBI" id="CHEBI:29035"/>
    </cofactor>
    <text evidence="1">Binds 2 manganese ions per subunit.</text>
</comment>
<comment type="pathway">
    <text evidence="1">Carbohydrate degradation; glycolysis; pyruvate from D-glyceraldehyde 3-phosphate: step 3/5.</text>
</comment>
<comment type="subunit">
    <text evidence="1">Monomer.</text>
</comment>
<comment type="similarity">
    <text evidence="1">Belongs to the BPG-independent phosphoglycerate mutase family.</text>
</comment>
<gene>
    <name evidence="1" type="primary">gpmI</name>
    <name type="ordered locus">MAE_32370</name>
</gene>